<gene>
    <name evidence="1" type="primary">ruvA</name>
    <name type="ordered locus">lpp1251</name>
</gene>
<feature type="chain" id="PRO_0000224878" description="Holliday junction branch migration complex subunit RuvA">
    <location>
        <begin position="1"/>
        <end position="199"/>
    </location>
</feature>
<feature type="region of interest" description="Domain I" evidence="1">
    <location>
        <begin position="1"/>
        <end position="65"/>
    </location>
</feature>
<feature type="region of interest" description="Domain II" evidence="1">
    <location>
        <begin position="66"/>
        <end position="144"/>
    </location>
</feature>
<feature type="region of interest" description="Flexible linker" evidence="1">
    <location>
        <begin position="144"/>
        <end position="148"/>
    </location>
</feature>
<feature type="region of interest" description="Domain III" evidence="1">
    <location>
        <begin position="149"/>
        <end position="199"/>
    </location>
</feature>
<accession>Q5X5R9</accession>
<name>RUVA_LEGPA</name>
<comment type="function">
    <text evidence="1">The RuvA-RuvB-RuvC complex processes Holliday junction (HJ) DNA during genetic recombination and DNA repair, while the RuvA-RuvB complex plays an important role in the rescue of blocked DNA replication forks via replication fork reversal (RFR). RuvA specifically binds to HJ cruciform DNA, conferring on it an open structure. The RuvB hexamer acts as an ATP-dependent pump, pulling dsDNA into and through the RuvAB complex. HJ branch migration allows RuvC to scan DNA until it finds its consensus sequence, where it cleaves and resolves the cruciform DNA.</text>
</comment>
<comment type="subunit">
    <text evidence="1">Homotetramer. Forms an RuvA(8)-RuvB(12)-Holliday junction (HJ) complex. HJ DNA is sandwiched between 2 RuvA tetramers; dsDNA enters through RuvA and exits via RuvB. An RuvB hexamer assembles on each DNA strand where it exits the tetramer. Each RuvB hexamer is contacted by two RuvA subunits (via domain III) on 2 adjacent RuvB subunits; this complex drives branch migration. In the full resolvosome a probable DNA-RuvA(4)-RuvB(12)-RuvC(2) complex forms which resolves the HJ.</text>
</comment>
<comment type="subcellular location">
    <subcellularLocation>
        <location evidence="1">Cytoplasm</location>
    </subcellularLocation>
</comment>
<comment type="domain">
    <text evidence="1">Has three domains with a flexible linker between the domains II and III and assumes an 'L' shape. Domain III is highly mobile and contacts RuvB.</text>
</comment>
<comment type="similarity">
    <text evidence="1">Belongs to the RuvA family.</text>
</comment>
<sequence>MIGWLHGQIIDKHQPGKLVLDVNGVGYDVETSLNTFFQIENGNQPIGLHIHTIVREDALLLYGFLDKEERSLFRSLIKVNGVGPKLAMTVLSSISPKEFIQCIHQENAALLTKLPGIGKKTAERLVVEMRDSIKQFDGSVSDTFQKQAGSTHSQQEAISALEALGYKPQEAWKVVNKIDNGNKSCEQLIREALQILSSR</sequence>
<reference key="1">
    <citation type="journal article" date="2004" name="Nat. Genet.">
        <title>Evidence in the Legionella pneumophila genome for exploitation of host cell functions and high genome plasticity.</title>
        <authorList>
            <person name="Cazalet C."/>
            <person name="Rusniok C."/>
            <person name="Brueggemann H."/>
            <person name="Zidane N."/>
            <person name="Magnier A."/>
            <person name="Ma L."/>
            <person name="Tichit M."/>
            <person name="Jarraud S."/>
            <person name="Bouchier C."/>
            <person name="Vandenesch F."/>
            <person name="Kunst F."/>
            <person name="Etienne J."/>
            <person name="Glaser P."/>
            <person name="Buchrieser C."/>
        </authorList>
    </citation>
    <scope>NUCLEOTIDE SEQUENCE [LARGE SCALE GENOMIC DNA]</scope>
    <source>
        <strain>Paris</strain>
    </source>
</reference>
<dbReference type="EMBL" id="CR628336">
    <property type="protein sequence ID" value="CAH12402.1"/>
    <property type="molecule type" value="Genomic_DNA"/>
</dbReference>
<dbReference type="RefSeq" id="WP_011213600.1">
    <property type="nucleotide sequence ID" value="NC_006368.1"/>
</dbReference>
<dbReference type="SMR" id="Q5X5R9"/>
<dbReference type="KEGG" id="lpp:lpp1251"/>
<dbReference type="LegioList" id="lpp1251"/>
<dbReference type="HOGENOM" id="CLU_087936_0_0_6"/>
<dbReference type="GO" id="GO:0005737">
    <property type="term" value="C:cytoplasm"/>
    <property type="evidence" value="ECO:0007669"/>
    <property type="project" value="UniProtKB-SubCell"/>
</dbReference>
<dbReference type="GO" id="GO:0009379">
    <property type="term" value="C:Holliday junction helicase complex"/>
    <property type="evidence" value="ECO:0007669"/>
    <property type="project" value="InterPro"/>
</dbReference>
<dbReference type="GO" id="GO:0048476">
    <property type="term" value="C:Holliday junction resolvase complex"/>
    <property type="evidence" value="ECO:0007669"/>
    <property type="project" value="UniProtKB-UniRule"/>
</dbReference>
<dbReference type="GO" id="GO:0005524">
    <property type="term" value="F:ATP binding"/>
    <property type="evidence" value="ECO:0007669"/>
    <property type="project" value="InterPro"/>
</dbReference>
<dbReference type="GO" id="GO:0000400">
    <property type="term" value="F:four-way junction DNA binding"/>
    <property type="evidence" value="ECO:0007669"/>
    <property type="project" value="UniProtKB-UniRule"/>
</dbReference>
<dbReference type="GO" id="GO:0009378">
    <property type="term" value="F:four-way junction helicase activity"/>
    <property type="evidence" value="ECO:0007669"/>
    <property type="project" value="InterPro"/>
</dbReference>
<dbReference type="GO" id="GO:0006310">
    <property type="term" value="P:DNA recombination"/>
    <property type="evidence" value="ECO:0007669"/>
    <property type="project" value="UniProtKB-UniRule"/>
</dbReference>
<dbReference type="GO" id="GO:0006281">
    <property type="term" value="P:DNA repair"/>
    <property type="evidence" value="ECO:0007669"/>
    <property type="project" value="UniProtKB-UniRule"/>
</dbReference>
<dbReference type="CDD" id="cd14332">
    <property type="entry name" value="UBA_RuvA_C"/>
    <property type="match status" value="1"/>
</dbReference>
<dbReference type="Gene3D" id="1.10.150.20">
    <property type="entry name" value="5' to 3' exonuclease, C-terminal subdomain"/>
    <property type="match status" value="1"/>
</dbReference>
<dbReference type="Gene3D" id="1.10.8.10">
    <property type="entry name" value="DNA helicase RuvA subunit, C-terminal domain"/>
    <property type="match status" value="1"/>
</dbReference>
<dbReference type="Gene3D" id="2.40.50.140">
    <property type="entry name" value="Nucleic acid-binding proteins"/>
    <property type="match status" value="1"/>
</dbReference>
<dbReference type="HAMAP" id="MF_00031">
    <property type="entry name" value="DNA_HJ_migration_RuvA"/>
    <property type="match status" value="1"/>
</dbReference>
<dbReference type="InterPro" id="IPR013849">
    <property type="entry name" value="DNA_helicase_Holl-junc_RuvA_I"/>
</dbReference>
<dbReference type="InterPro" id="IPR003583">
    <property type="entry name" value="Hlx-hairpin-Hlx_DNA-bd_motif"/>
</dbReference>
<dbReference type="InterPro" id="IPR012340">
    <property type="entry name" value="NA-bd_OB-fold"/>
</dbReference>
<dbReference type="InterPro" id="IPR000085">
    <property type="entry name" value="RuvA"/>
</dbReference>
<dbReference type="InterPro" id="IPR010994">
    <property type="entry name" value="RuvA_2-like"/>
</dbReference>
<dbReference type="InterPro" id="IPR011114">
    <property type="entry name" value="RuvA_C"/>
</dbReference>
<dbReference type="InterPro" id="IPR036267">
    <property type="entry name" value="RuvA_C_sf"/>
</dbReference>
<dbReference type="NCBIfam" id="TIGR00084">
    <property type="entry name" value="ruvA"/>
    <property type="match status" value="1"/>
</dbReference>
<dbReference type="Pfam" id="PF14520">
    <property type="entry name" value="HHH_5"/>
    <property type="match status" value="1"/>
</dbReference>
<dbReference type="Pfam" id="PF07499">
    <property type="entry name" value="RuvA_C"/>
    <property type="match status" value="1"/>
</dbReference>
<dbReference type="Pfam" id="PF01330">
    <property type="entry name" value="RuvA_N"/>
    <property type="match status" value="1"/>
</dbReference>
<dbReference type="SMART" id="SM00278">
    <property type="entry name" value="HhH1"/>
    <property type="match status" value="2"/>
</dbReference>
<dbReference type="SUPFAM" id="SSF46929">
    <property type="entry name" value="DNA helicase RuvA subunit, C-terminal domain"/>
    <property type="match status" value="1"/>
</dbReference>
<dbReference type="SUPFAM" id="SSF50249">
    <property type="entry name" value="Nucleic acid-binding proteins"/>
    <property type="match status" value="1"/>
</dbReference>
<dbReference type="SUPFAM" id="SSF47781">
    <property type="entry name" value="RuvA domain 2-like"/>
    <property type="match status" value="1"/>
</dbReference>
<protein>
    <recommendedName>
        <fullName evidence="1">Holliday junction branch migration complex subunit RuvA</fullName>
    </recommendedName>
</protein>
<evidence type="ECO:0000255" key="1">
    <source>
        <dbReference type="HAMAP-Rule" id="MF_00031"/>
    </source>
</evidence>
<organism>
    <name type="scientific">Legionella pneumophila (strain Paris)</name>
    <dbReference type="NCBI Taxonomy" id="297246"/>
    <lineage>
        <taxon>Bacteria</taxon>
        <taxon>Pseudomonadati</taxon>
        <taxon>Pseudomonadota</taxon>
        <taxon>Gammaproteobacteria</taxon>
        <taxon>Legionellales</taxon>
        <taxon>Legionellaceae</taxon>
        <taxon>Legionella</taxon>
    </lineage>
</organism>
<keyword id="KW-0963">Cytoplasm</keyword>
<keyword id="KW-0227">DNA damage</keyword>
<keyword id="KW-0233">DNA recombination</keyword>
<keyword id="KW-0234">DNA repair</keyword>
<keyword id="KW-0238">DNA-binding</keyword>
<proteinExistence type="inferred from homology"/>